<comment type="function">
    <text evidence="2">Skin-specific kinase that plays a key role in glycerol metabolism, catalyzing its phosphorylation to produce sn-glycerol 3-phosphate. Involved in skin-specific regulation of sterol regulatory element-binding protein (SREBP) processing and lipid biosynthesis.</text>
</comment>
<comment type="catalytic activity">
    <reaction evidence="2">
        <text>glycerol + ATP = sn-glycerol 3-phosphate + ADP + H(+)</text>
        <dbReference type="Rhea" id="RHEA:21644"/>
        <dbReference type="ChEBI" id="CHEBI:15378"/>
        <dbReference type="ChEBI" id="CHEBI:17754"/>
        <dbReference type="ChEBI" id="CHEBI:30616"/>
        <dbReference type="ChEBI" id="CHEBI:57597"/>
        <dbReference type="ChEBI" id="CHEBI:456216"/>
        <dbReference type="EC" id="2.7.1.30"/>
    </reaction>
    <physiologicalReaction direction="left-to-right" evidence="2">
        <dbReference type="Rhea" id="RHEA:21645"/>
    </physiologicalReaction>
</comment>
<comment type="pathway">
    <text evidence="2">Polyol metabolism; glycerol degradation via glycerol kinase pathway; sn-glycerol 3-phosphate from glycerol: step 1/1.</text>
</comment>
<comment type="subcellular location">
    <subcellularLocation>
        <location evidence="2">Cytoplasm</location>
    </subcellularLocation>
</comment>
<comment type="alternative products">
    <event type="alternative splicing"/>
    <isoform>
        <id>Q6ZS86-1</id>
        <name>1</name>
        <sequence type="displayed"/>
    </isoform>
    <isoform>
        <id>Q6ZS86-2</id>
        <name>2</name>
        <sequence type="described" ref="VSP_032122 VSP_032123"/>
    </isoform>
    <isoform>
        <id>Q6ZS86-3</id>
        <name>3</name>
        <sequence type="described" ref="VSP_032121"/>
    </isoform>
</comment>
<comment type="similarity">
    <text evidence="5">Belongs to the FGGY kinase family.</text>
</comment>
<protein>
    <recommendedName>
        <fullName>Glycerol kinase 5</fullName>
        <shortName>GK 5</shortName>
        <shortName>Glycerokinase 5</shortName>
        <ecNumber evidence="2">2.7.1.30</ecNumber>
    </recommendedName>
    <alternativeName>
        <fullName>ATP:glycerol 3-phosphotransferase 5</fullName>
    </alternativeName>
</protein>
<keyword id="KW-0025">Alternative splicing</keyword>
<keyword id="KW-0067">ATP-binding</keyword>
<keyword id="KW-0963">Cytoplasm</keyword>
<keyword id="KW-0319">Glycerol metabolism</keyword>
<keyword id="KW-0418">Kinase</keyword>
<keyword id="KW-0547">Nucleotide-binding</keyword>
<keyword id="KW-1267">Proteomics identification</keyword>
<keyword id="KW-1185">Reference proteome</keyword>
<keyword id="KW-0808">Transferase</keyword>
<dbReference type="EC" id="2.7.1.30" evidence="2"/>
<dbReference type="EMBL" id="AK090901">
    <property type="protein sequence ID" value="BAC03542.1"/>
    <property type="molecule type" value="mRNA"/>
</dbReference>
<dbReference type="EMBL" id="AK127641">
    <property type="protein sequence ID" value="BAC87068.1"/>
    <property type="molecule type" value="mRNA"/>
</dbReference>
<dbReference type="EMBL" id="AK313792">
    <property type="protein sequence ID" value="BAG36529.1"/>
    <property type="molecule type" value="mRNA"/>
</dbReference>
<dbReference type="EMBL" id="AC108679">
    <property type="status" value="NOT_ANNOTATED_CDS"/>
    <property type="molecule type" value="Genomic_DNA"/>
</dbReference>
<dbReference type="EMBL" id="CH471052">
    <property type="protein sequence ID" value="EAW78974.1"/>
    <property type="molecule type" value="Genomic_DNA"/>
</dbReference>
<dbReference type="EMBL" id="CH471052">
    <property type="protein sequence ID" value="EAW78975.1"/>
    <property type="molecule type" value="Genomic_DNA"/>
</dbReference>
<dbReference type="EMBL" id="BC032470">
    <property type="protein sequence ID" value="AAH32470.1"/>
    <property type="molecule type" value="mRNA"/>
</dbReference>
<dbReference type="CCDS" id="CCDS33871.1">
    <molecule id="Q6ZS86-1"/>
</dbReference>
<dbReference type="RefSeq" id="NP_001034636.1">
    <molecule id="Q6ZS86-1"/>
    <property type="nucleotide sequence ID" value="NM_001039547.3"/>
</dbReference>
<dbReference type="SMR" id="Q6ZS86"/>
<dbReference type="BioGRID" id="129160">
    <property type="interactions" value="6"/>
</dbReference>
<dbReference type="FunCoup" id="Q6ZS86">
    <property type="interactions" value="581"/>
</dbReference>
<dbReference type="IntAct" id="Q6ZS86">
    <property type="interactions" value="3"/>
</dbReference>
<dbReference type="STRING" id="9606.ENSP00000418001"/>
<dbReference type="iPTMnet" id="Q6ZS86"/>
<dbReference type="PhosphoSitePlus" id="Q6ZS86"/>
<dbReference type="BioMuta" id="GK5"/>
<dbReference type="DMDM" id="338817880"/>
<dbReference type="jPOST" id="Q6ZS86"/>
<dbReference type="MassIVE" id="Q6ZS86"/>
<dbReference type="PaxDb" id="9606-ENSP00000418001"/>
<dbReference type="PeptideAtlas" id="Q6ZS86"/>
<dbReference type="ProteomicsDB" id="68203">
    <molecule id="Q6ZS86-1"/>
</dbReference>
<dbReference type="ProteomicsDB" id="68204">
    <molecule id="Q6ZS86-2"/>
</dbReference>
<dbReference type="ProteomicsDB" id="68205">
    <molecule id="Q6ZS86-3"/>
</dbReference>
<dbReference type="Antibodypedia" id="35071">
    <property type="antibodies" value="191 antibodies from 25 providers"/>
</dbReference>
<dbReference type="DNASU" id="256356"/>
<dbReference type="Ensembl" id="ENST00000392993.7">
    <molecule id="Q6ZS86-1"/>
    <property type="protein sequence ID" value="ENSP00000418001.1"/>
    <property type="gene ID" value="ENSG00000175066.16"/>
</dbReference>
<dbReference type="Ensembl" id="ENST00000480757.5">
    <molecule id="Q6ZS86-2"/>
    <property type="protein sequence ID" value="ENSP00000419031.1"/>
    <property type="gene ID" value="ENSG00000175066.16"/>
</dbReference>
<dbReference type="Ensembl" id="ENST00000492097.5">
    <molecule id="Q6ZS86-2"/>
    <property type="protein sequence ID" value="ENSP00000420312.1"/>
    <property type="gene ID" value="ENSG00000175066.16"/>
</dbReference>
<dbReference type="GeneID" id="256356"/>
<dbReference type="KEGG" id="hsa:256356"/>
<dbReference type="MANE-Select" id="ENST00000392993.7">
    <property type="protein sequence ID" value="ENSP00000418001.1"/>
    <property type="RefSeq nucleotide sequence ID" value="NM_001039547.3"/>
    <property type="RefSeq protein sequence ID" value="NP_001034636.1"/>
</dbReference>
<dbReference type="UCSC" id="uc003euq.2">
    <molecule id="Q6ZS86-1"/>
    <property type="organism name" value="human"/>
</dbReference>
<dbReference type="AGR" id="HGNC:28635"/>
<dbReference type="CTD" id="256356"/>
<dbReference type="DisGeNET" id="256356"/>
<dbReference type="GeneCards" id="GK5"/>
<dbReference type="HGNC" id="HGNC:28635">
    <property type="gene designation" value="GK5"/>
</dbReference>
<dbReference type="HPA" id="ENSG00000175066">
    <property type="expression patterns" value="Low tissue specificity"/>
</dbReference>
<dbReference type="MIM" id="620801">
    <property type="type" value="gene"/>
</dbReference>
<dbReference type="neXtProt" id="NX_Q6ZS86"/>
<dbReference type="OpenTargets" id="ENSG00000175066"/>
<dbReference type="PharmGKB" id="PA162389723"/>
<dbReference type="VEuPathDB" id="HostDB:ENSG00000175066"/>
<dbReference type="eggNOG" id="KOG2517">
    <property type="taxonomic scope" value="Eukaryota"/>
</dbReference>
<dbReference type="GeneTree" id="ENSGT01000000214434"/>
<dbReference type="HOGENOM" id="CLU_009281_2_3_1"/>
<dbReference type="InParanoid" id="Q6ZS86"/>
<dbReference type="OMA" id="TFLTWNH"/>
<dbReference type="OrthoDB" id="6278781at2759"/>
<dbReference type="PAN-GO" id="Q6ZS86">
    <property type="GO annotations" value="6 GO annotations based on evolutionary models"/>
</dbReference>
<dbReference type="PhylomeDB" id="Q6ZS86"/>
<dbReference type="TreeFam" id="TF321504"/>
<dbReference type="BRENDA" id="2.7.1.30">
    <property type="organism ID" value="2681"/>
</dbReference>
<dbReference type="PathwayCommons" id="Q6ZS86"/>
<dbReference type="UniPathway" id="UPA00618">
    <property type="reaction ID" value="UER00672"/>
</dbReference>
<dbReference type="BioGRID-ORCS" id="256356">
    <property type="hits" value="10 hits in 1158 CRISPR screens"/>
</dbReference>
<dbReference type="ChiTaRS" id="GK5">
    <property type="organism name" value="human"/>
</dbReference>
<dbReference type="GenomeRNAi" id="256356"/>
<dbReference type="Pharos" id="Q6ZS86">
    <property type="development level" value="Tbio"/>
</dbReference>
<dbReference type="PRO" id="PR:Q6ZS86"/>
<dbReference type="Proteomes" id="UP000005640">
    <property type="component" value="Chromosome 3"/>
</dbReference>
<dbReference type="RNAct" id="Q6ZS86">
    <property type="molecule type" value="protein"/>
</dbReference>
<dbReference type="Bgee" id="ENSG00000175066">
    <property type="expression patterns" value="Expressed in ascending aorta and 165 other cell types or tissues"/>
</dbReference>
<dbReference type="ExpressionAtlas" id="Q6ZS86">
    <property type="expression patterns" value="baseline and differential"/>
</dbReference>
<dbReference type="GO" id="GO:0005737">
    <property type="term" value="C:cytoplasm"/>
    <property type="evidence" value="ECO:0000250"/>
    <property type="project" value="UniProtKB"/>
</dbReference>
<dbReference type="GO" id="GO:0005739">
    <property type="term" value="C:mitochondrion"/>
    <property type="evidence" value="ECO:0006056"/>
    <property type="project" value="FlyBase"/>
</dbReference>
<dbReference type="GO" id="GO:0005524">
    <property type="term" value="F:ATP binding"/>
    <property type="evidence" value="ECO:0007669"/>
    <property type="project" value="UniProtKB-KW"/>
</dbReference>
<dbReference type="GO" id="GO:0004370">
    <property type="term" value="F:glycerol kinase activity"/>
    <property type="evidence" value="ECO:0000250"/>
    <property type="project" value="UniProtKB"/>
</dbReference>
<dbReference type="GO" id="GO:0019563">
    <property type="term" value="P:glycerol catabolic process"/>
    <property type="evidence" value="ECO:0007669"/>
    <property type="project" value="UniProtKB-UniPathway"/>
</dbReference>
<dbReference type="GO" id="GO:0006071">
    <property type="term" value="P:glycerol metabolic process"/>
    <property type="evidence" value="ECO:0000318"/>
    <property type="project" value="GO_Central"/>
</dbReference>
<dbReference type="GO" id="GO:0046167">
    <property type="term" value="P:glycerol-3-phosphate biosynthetic process"/>
    <property type="evidence" value="ECO:0000250"/>
    <property type="project" value="UniProtKB"/>
</dbReference>
<dbReference type="GO" id="GO:0006641">
    <property type="term" value="P:triglyceride metabolic process"/>
    <property type="evidence" value="ECO:0000318"/>
    <property type="project" value="GO_Central"/>
</dbReference>
<dbReference type="CDD" id="cd07793">
    <property type="entry name" value="ASKHA_NBD_FGGY_GK5-like"/>
    <property type="match status" value="1"/>
</dbReference>
<dbReference type="FunFam" id="3.30.420.40:FF:000102">
    <property type="entry name" value="Putative glycerol kinase 5"/>
    <property type="match status" value="1"/>
</dbReference>
<dbReference type="FunFam" id="3.30.420.40:FF:000104">
    <property type="entry name" value="putative glycerol kinase 5"/>
    <property type="match status" value="1"/>
</dbReference>
<dbReference type="Gene3D" id="3.30.420.40">
    <property type="match status" value="2"/>
</dbReference>
<dbReference type="InterPro" id="IPR043129">
    <property type="entry name" value="ATPase_NBD"/>
</dbReference>
<dbReference type="InterPro" id="IPR000577">
    <property type="entry name" value="Carb_kinase_FGGY"/>
</dbReference>
<dbReference type="InterPro" id="IPR018483">
    <property type="entry name" value="Carb_kinase_FGGY_CS"/>
</dbReference>
<dbReference type="InterPro" id="IPR018485">
    <property type="entry name" value="FGGY_C"/>
</dbReference>
<dbReference type="InterPro" id="IPR018484">
    <property type="entry name" value="FGGY_N"/>
</dbReference>
<dbReference type="InterPro" id="IPR037444">
    <property type="entry name" value="GK5"/>
</dbReference>
<dbReference type="PANTHER" id="PTHR10196:SF68">
    <property type="entry name" value="GLYCEROL KINASE 5-RELATED"/>
    <property type="match status" value="1"/>
</dbReference>
<dbReference type="PANTHER" id="PTHR10196">
    <property type="entry name" value="SUGAR KINASE"/>
    <property type="match status" value="1"/>
</dbReference>
<dbReference type="Pfam" id="PF02782">
    <property type="entry name" value="FGGY_C"/>
    <property type="match status" value="1"/>
</dbReference>
<dbReference type="Pfam" id="PF00370">
    <property type="entry name" value="FGGY_N"/>
    <property type="match status" value="1"/>
</dbReference>
<dbReference type="PIRSF" id="PIRSF000538">
    <property type="entry name" value="GlpK"/>
    <property type="match status" value="1"/>
</dbReference>
<dbReference type="SUPFAM" id="SSF53067">
    <property type="entry name" value="Actin-like ATPase domain"/>
    <property type="match status" value="2"/>
</dbReference>
<dbReference type="PROSITE" id="PS00445">
    <property type="entry name" value="FGGY_KINASES_2"/>
    <property type="match status" value="1"/>
</dbReference>
<gene>
    <name evidence="6" type="primary">GK5</name>
</gene>
<feature type="chain" id="PRO_0000323754" description="Glycerol kinase 5">
    <location>
        <begin position="1"/>
        <end position="529"/>
    </location>
</feature>
<feature type="binding site" evidence="1">
    <location>
        <position position="28"/>
    </location>
    <ligand>
        <name>ATP</name>
        <dbReference type="ChEBI" id="CHEBI:30616"/>
    </ligand>
</feature>
<feature type="binding site" evidence="1">
    <location>
        <position position="29"/>
    </location>
    <ligand>
        <name>ATP</name>
        <dbReference type="ChEBI" id="CHEBI:30616"/>
    </ligand>
</feature>
<feature type="binding site" evidence="1">
    <location>
        <position position="98"/>
    </location>
    <ligand>
        <name>glycerol</name>
        <dbReference type="ChEBI" id="CHEBI:17754"/>
    </ligand>
</feature>
<feature type="binding site" evidence="1">
    <location>
        <position position="275"/>
    </location>
    <ligand>
        <name>glycerol</name>
        <dbReference type="ChEBI" id="CHEBI:17754"/>
    </ligand>
</feature>
<feature type="binding site" evidence="1">
    <location>
        <position position="276"/>
    </location>
    <ligand>
        <name>glycerol</name>
        <dbReference type="ChEBI" id="CHEBI:17754"/>
    </ligand>
</feature>
<feature type="binding site" evidence="1">
    <location>
        <position position="297"/>
    </location>
    <ligand>
        <name>ATP</name>
        <dbReference type="ChEBI" id="CHEBI:30616"/>
    </ligand>
</feature>
<feature type="binding site" evidence="1">
    <location>
        <position position="340"/>
    </location>
    <ligand>
        <name>ATP</name>
        <dbReference type="ChEBI" id="CHEBI:30616"/>
    </ligand>
</feature>
<feature type="binding site" evidence="1">
    <location>
        <position position="440"/>
    </location>
    <ligand>
        <name>ATP</name>
        <dbReference type="ChEBI" id="CHEBI:30616"/>
    </ligand>
</feature>
<feature type="splice variant" id="VSP_032121" description="In isoform 3." evidence="3">
    <location>
        <begin position="1"/>
        <end position="279"/>
    </location>
</feature>
<feature type="splice variant" id="VSP_032122" description="In isoform 2." evidence="3 4">
    <original>VADQQSAMFGECCFQTGDVKLTMGTGTFL</original>
    <variation>LKVPGYDQNICYIFGKGTIEPVFYHGSTL</variation>
    <location>
        <begin position="273"/>
        <end position="301"/>
    </location>
</feature>
<feature type="splice variant" id="VSP_032123" description="In isoform 2." evidence="3 4">
    <location>
        <begin position="302"/>
        <end position="529"/>
    </location>
</feature>
<feature type="sequence conflict" description="In Ref. 1; BAC87068." evidence="5" ref="1">
    <original>T</original>
    <variation>I</variation>
    <location>
        <position position="339"/>
    </location>
</feature>
<evidence type="ECO:0000250" key="1">
    <source>
        <dbReference type="UniProtKB" id="P0A6F3"/>
    </source>
</evidence>
<evidence type="ECO:0000250" key="2">
    <source>
        <dbReference type="UniProtKB" id="Q8BX05"/>
    </source>
</evidence>
<evidence type="ECO:0000303" key="3">
    <source>
    </source>
</evidence>
<evidence type="ECO:0000303" key="4">
    <source>
    </source>
</evidence>
<evidence type="ECO:0000305" key="5"/>
<evidence type="ECO:0000312" key="6">
    <source>
        <dbReference type="HGNC" id="HGNC:28635"/>
    </source>
</evidence>
<name>GLPK5_HUMAN</name>
<reference key="1">
    <citation type="journal article" date="2004" name="Nat. Genet.">
        <title>Complete sequencing and characterization of 21,243 full-length human cDNAs.</title>
        <authorList>
            <person name="Ota T."/>
            <person name="Suzuki Y."/>
            <person name="Nishikawa T."/>
            <person name="Otsuki T."/>
            <person name="Sugiyama T."/>
            <person name="Irie R."/>
            <person name="Wakamatsu A."/>
            <person name="Hayashi K."/>
            <person name="Sato H."/>
            <person name="Nagai K."/>
            <person name="Kimura K."/>
            <person name="Makita H."/>
            <person name="Sekine M."/>
            <person name="Obayashi M."/>
            <person name="Nishi T."/>
            <person name="Shibahara T."/>
            <person name="Tanaka T."/>
            <person name="Ishii S."/>
            <person name="Yamamoto J."/>
            <person name="Saito K."/>
            <person name="Kawai Y."/>
            <person name="Isono Y."/>
            <person name="Nakamura Y."/>
            <person name="Nagahari K."/>
            <person name="Murakami K."/>
            <person name="Yasuda T."/>
            <person name="Iwayanagi T."/>
            <person name="Wagatsuma M."/>
            <person name="Shiratori A."/>
            <person name="Sudo H."/>
            <person name="Hosoiri T."/>
            <person name="Kaku Y."/>
            <person name="Kodaira H."/>
            <person name="Kondo H."/>
            <person name="Sugawara M."/>
            <person name="Takahashi M."/>
            <person name="Kanda K."/>
            <person name="Yokoi T."/>
            <person name="Furuya T."/>
            <person name="Kikkawa E."/>
            <person name="Omura Y."/>
            <person name="Abe K."/>
            <person name="Kamihara K."/>
            <person name="Katsuta N."/>
            <person name="Sato K."/>
            <person name="Tanikawa M."/>
            <person name="Yamazaki M."/>
            <person name="Ninomiya K."/>
            <person name="Ishibashi T."/>
            <person name="Yamashita H."/>
            <person name="Murakawa K."/>
            <person name="Fujimori K."/>
            <person name="Tanai H."/>
            <person name="Kimata M."/>
            <person name="Watanabe M."/>
            <person name="Hiraoka S."/>
            <person name="Chiba Y."/>
            <person name="Ishida S."/>
            <person name="Ono Y."/>
            <person name="Takiguchi S."/>
            <person name="Watanabe S."/>
            <person name="Yosida M."/>
            <person name="Hotuta T."/>
            <person name="Kusano J."/>
            <person name="Kanehori K."/>
            <person name="Takahashi-Fujii A."/>
            <person name="Hara H."/>
            <person name="Tanase T.-O."/>
            <person name="Nomura Y."/>
            <person name="Togiya S."/>
            <person name="Komai F."/>
            <person name="Hara R."/>
            <person name="Takeuchi K."/>
            <person name="Arita M."/>
            <person name="Imose N."/>
            <person name="Musashino K."/>
            <person name="Yuuki H."/>
            <person name="Oshima A."/>
            <person name="Sasaki N."/>
            <person name="Aotsuka S."/>
            <person name="Yoshikawa Y."/>
            <person name="Matsunawa H."/>
            <person name="Ichihara T."/>
            <person name="Shiohata N."/>
            <person name="Sano S."/>
            <person name="Moriya S."/>
            <person name="Momiyama H."/>
            <person name="Satoh N."/>
            <person name="Takami S."/>
            <person name="Terashima Y."/>
            <person name="Suzuki O."/>
            <person name="Nakagawa S."/>
            <person name="Senoh A."/>
            <person name="Mizoguchi H."/>
            <person name="Goto Y."/>
            <person name="Shimizu F."/>
            <person name="Wakebe H."/>
            <person name="Hishigaki H."/>
            <person name="Watanabe T."/>
            <person name="Sugiyama A."/>
            <person name="Takemoto M."/>
            <person name="Kawakami B."/>
            <person name="Yamazaki M."/>
            <person name="Watanabe K."/>
            <person name="Kumagai A."/>
            <person name="Itakura S."/>
            <person name="Fukuzumi Y."/>
            <person name="Fujimori Y."/>
            <person name="Komiyama M."/>
            <person name="Tashiro H."/>
            <person name="Tanigami A."/>
            <person name="Fujiwara T."/>
            <person name="Ono T."/>
            <person name="Yamada K."/>
            <person name="Fujii Y."/>
            <person name="Ozaki K."/>
            <person name="Hirao M."/>
            <person name="Ohmori Y."/>
            <person name="Kawabata A."/>
            <person name="Hikiji T."/>
            <person name="Kobatake N."/>
            <person name="Inagaki H."/>
            <person name="Ikema Y."/>
            <person name="Okamoto S."/>
            <person name="Okitani R."/>
            <person name="Kawakami T."/>
            <person name="Noguchi S."/>
            <person name="Itoh T."/>
            <person name="Shigeta K."/>
            <person name="Senba T."/>
            <person name="Matsumura K."/>
            <person name="Nakajima Y."/>
            <person name="Mizuno T."/>
            <person name="Morinaga M."/>
            <person name="Sasaki M."/>
            <person name="Togashi T."/>
            <person name="Oyama M."/>
            <person name="Hata H."/>
            <person name="Watanabe M."/>
            <person name="Komatsu T."/>
            <person name="Mizushima-Sugano J."/>
            <person name="Satoh T."/>
            <person name="Shirai Y."/>
            <person name="Takahashi Y."/>
            <person name="Nakagawa K."/>
            <person name="Okumura K."/>
            <person name="Nagase T."/>
            <person name="Nomura N."/>
            <person name="Kikuchi H."/>
            <person name="Masuho Y."/>
            <person name="Yamashita R."/>
            <person name="Nakai K."/>
            <person name="Yada T."/>
            <person name="Nakamura Y."/>
            <person name="Ohara O."/>
            <person name="Isogai T."/>
            <person name="Sugano S."/>
        </authorList>
    </citation>
    <scope>NUCLEOTIDE SEQUENCE [LARGE SCALE MRNA] (ISOFORMS 1; 2 AND 3)</scope>
    <source>
        <tissue>Amygdala</tissue>
        <tissue>Kidney</tissue>
        <tissue>Trachea</tissue>
    </source>
</reference>
<reference key="2">
    <citation type="journal article" date="2006" name="Nature">
        <title>The DNA sequence, annotation and analysis of human chromosome 3.</title>
        <authorList>
            <person name="Muzny D.M."/>
            <person name="Scherer S.E."/>
            <person name="Kaul R."/>
            <person name="Wang J."/>
            <person name="Yu J."/>
            <person name="Sudbrak R."/>
            <person name="Buhay C.J."/>
            <person name="Chen R."/>
            <person name="Cree A."/>
            <person name="Ding Y."/>
            <person name="Dugan-Rocha S."/>
            <person name="Gill R."/>
            <person name="Gunaratne P."/>
            <person name="Harris R.A."/>
            <person name="Hawes A.C."/>
            <person name="Hernandez J."/>
            <person name="Hodgson A.V."/>
            <person name="Hume J."/>
            <person name="Jackson A."/>
            <person name="Khan Z.M."/>
            <person name="Kovar-Smith C."/>
            <person name="Lewis L.R."/>
            <person name="Lozado R.J."/>
            <person name="Metzker M.L."/>
            <person name="Milosavljevic A."/>
            <person name="Miner G.R."/>
            <person name="Morgan M.B."/>
            <person name="Nazareth L.V."/>
            <person name="Scott G."/>
            <person name="Sodergren E."/>
            <person name="Song X.-Z."/>
            <person name="Steffen D."/>
            <person name="Wei S."/>
            <person name="Wheeler D.A."/>
            <person name="Wright M.W."/>
            <person name="Worley K.C."/>
            <person name="Yuan Y."/>
            <person name="Zhang Z."/>
            <person name="Adams C.Q."/>
            <person name="Ansari-Lari M.A."/>
            <person name="Ayele M."/>
            <person name="Brown M.J."/>
            <person name="Chen G."/>
            <person name="Chen Z."/>
            <person name="Clendenning J."/>
            <person name="Clerc-Blankenburg K.P."/>
            <person name="Chen R."/>
            <person name="Chen Z."/>
            <person name="Davis C."/>
            <person name="Delgado O."/>
            <person name="Dinh H.H."/>
            <person name="Dong W."/>
            <person name="Draper H."/>
            <person name="Ernst S."/>
            <person name="Fu G."/>
            <person name="Gonzalez-Garay M.L."/>
            <person name="Garcia D.K."/>
            <person name="Gillett W."/>
            <person name="Gu J."/>
            <person name="Hao B."/>
            <person name="Haugen E."/>
            <person name="Havlak P."/>
            <person name="He X."/>
            <person name="Hennig S."/>
            <person name="Hu S."/>
            <person name="Huang W."/>
            <person name="Jackson L.R."/>
            <person name="Jacob L.S."/>
            <person name="Kelly S.H."/>
            <person name="Kube M."/>
            <person name="Levy R."/>
            <person name="Li Z."/>
            <person name="Liu B."/>
            <person name="Liu J."/>
            <person name="Liu W."/>
            <person name="Lu J."/>
            <person name="Maheshwari M."/>
            <person name="Nguyen B.-V."/>
            <person name="Okwuonu G.O."/>
            <person name="Palmeiri A."/>
            <person name="Pasternak S."/>
            <person name="Perez L.M."/>
            <person name="Phelps K.A."/>
            <person name="Plopper F.J."/>
            <person name="Qiang B."/>
            <person name="Raymond C."/>
            <person name="Rodriguez R."/>
            <person name="Saenphimmachak C."/>
            <person name="Santibanez J."/>
            <person name="Shen H."/>
            <person name="Shen Y."/>
            <person name="Subramanian S."/>
            <person name="Tabor P.E."/>
            <person name="Verduzco D."/>
            <person name="Waldron L."/>
            <person name="Wang J."/>
            <person name="Wang J."/>
            <person name="Wang Q."/>
            <person name="Williams G.A."/>
            <person name="Wong G.K.-S."/>
            <person name="Yao Z."/>
            <person name="Zhang J."/>
            <person name="Zhang X."/>
            <person name="Zhao G."/>
            <person name="Zhou J."/>
            <person name="Zhou Y."/>
            <person name="Nelson D."/>
            <person name="Lehrach H."/>
            <person name="Reinhardt R."/>
            <person name="Naylor S.L."/>
            <person name="Yang H."/>
            <person name="Olson M."/>
            <person name="Weinstock G."/>
            <person name="Gibbs R.A."/>
        </authorList>
    </citation>
    <scope>NUCLEOTIDE SEQUENCE [LARGE SCALE GENOMIC DNA]</scope>
</reference>
<reference key="3">
    <citation type="submission" date="2005-09" db="EMBL/GenBank/DDBJ databases">
        <authorList>
            <person name="Mural R.J."/>
            <person name="Istrail S."/>
            <person name="Sutton G.G."/>
            <person name="Florea L."/>
            <person name="Halpern A.L."/>
            <person name="Mobarry C.M."/>
            <person name="Lippert R."/>
            <person name="Walenz B."/>
            <person name="Shatkay H."/>
            <person name="Dew I."/>
            <person name="Miller J.R."/>
            <person name="Flanigan M.J."/>
            <person name="Edwards N.J."/>
            <person name="Bolanos R."/>
            <person name="Fasulo D."/>
            <person name="Halldorsson B.V."/>
            <person name="Hannenhalli S."/>
            <person name="Turner R."/>
            <person name="Yooseph S."/>
            <person name="Lu F."/>
            <person name="Nusskern D.R."/>
            <person name="Shue B.C."/>
            <person name="Zheng X.H."/>
            <person name="Zhong F."/>
            <person name="Delcher A.L."/>
            <person name="Huson D.H."/>
            <person name="Kravitz S.A."/>
            <person name="Mouchard L."/>
            <person name="Reinert K."/>
            <person name="Remington K.A."/>
            <person name="Clark A.G."/>
            <person name="Waterman M.S."/>
            <person name="Eichler E.E."/>
            <person name="Adams M.D."/>
            <person name="Hunkapiller M.W."/>
            <person name="Myers E.W."/>
            <person name="Venter J.C."/>
        </authorList>
    </citation>
    <scope>NUCLEOTIDE SEQUENCE [LARGE SCALE GENOMIC DNA]</scope>
</reference>
<reference key="4">
    <citation type="journal article" date="2004" name="Genome Res.">
        <title>The status, quality, and expansion of the NIH full-length cDNA project: the Mammalian Gene Collection (MGC).</title>
        <authorList>
            <consortium name="The MGC Project Team"/>
        </authorList>
    </citation>
    <scope>NUCLEOTIDE SEQUENCE [LARGE SCALE MRNA] (ISOFORM 2)</scope>
    <source>
        <tissue>Blood</tissue>
    </source>
</reference>
<organism>
    <name type="scientific">Homo sapiens</name>
    <name type="common">Human</name>
    <dbReference type="NCBI Taxonomy" id="9606"/>
    <lineage>
        <taxon>Eukaryota</taxon>
        <taxon>Metazoa</taxon>
        <taxon>Chordata</taxon>
        <taxon>Craniata</taxon>
        <taxon>Vertebrata</taxon>
        <taxon>Euteleostomi</taxon>
        <taxon>Mammalia</taxon>
        <taxon>Eutheria</taxon>
        <taxon>Euarchontoglires</taxon>
        <taxon>Primates</taxon>
        <taxon>Haplorrhini</taxon>
        <taxon>Catarrhini</taxon>
        <taxon>Hominidae</taxon>
        <taxon>Homo</taxon>
    </lineage>
</organism>
<sequence length="529" mass="59156">MSGLLTDPEQRAQEPRYPGFVLGLDVGSSVIRCHVYDRAARVCGSSVQKVENLYPQIGWVEIDPDVLWIQFVAVIKEAVKAAGIQMNQIVGLGISTQRATFITWNKKTGNHFHNFISWQDLRAVELVKSWNNSLLMKIFHSSCRVLHFFTRSKRLFTASLFTFTTQQTSLRLVWILQNLTEVQKAVEEENCCFGTIDTWLLYKLTKGSVYATDFSNASTTGLFDPYKMCWSGMITSLISIPLSLLPPVRDTSHNFGSVDEEIFGVPIPIVALVADQQSAMFGECCFQTGDVKLTMGTGTFLDINTGNSLQQTTGGFYPLIGWKIGQEVVCLAESNAGDTGTAIKWAQQLDLFTDAAETEKMAKSLEDSEGVCFVPSFSGLQAPLNDPWACASFMGLKPSTSKYHLVRAILESIAFRNKQLYEMMKKEIHIPVRKIRADGGVCKNGFVMQMTSDLINENIDRPADIDMSCLGAASLAGLAVGFWTDKEELKKLRQSEVVFKPQKKCQEYEMSLENWAKAVKRSMNWYNKT</sequence>
<proteinExistence type="evidence at protein level"/>
<accession>Q6ZS86</accession>
<accession>B2R9I2</accession>
<accession>D3DNG2</accession>
<accession>Q8N2A7</accession>
<accession>Q8N5E6</accession>